<organism>
    <name type="scientific">Yarrowia lipolytica (strain CLIB 122 / E 150)</name>
    <name type="common">Yeast</name>
    <name type="synonym">Candida lipolytica</name>
    <dbReference type="NCBI Taxonomy" id="284591"/>
    <lineage>
        <taxon>Eukaryota</taxon>
        <taxon>Fungi</taxon>
        <taxon>Dikarya</taxon>
        <taxon>Ascomycota</taxon>
        <taxon>Saccharomycotina</taxon>
        <taxon>Dipodascomycetes</taxon>
        <taxon>Dipodascales</taxon>
        <taxon>Dipodascales incertae sedis</taxon>
        <taxon>Yarrowia</taxon>
    </lineage>
</organism>
<keyword id="KW-0007">Acetylation</keyword>
<keyword id="KW-0010">Activator</keyword>
<keyword id="KW-0156">Chromatin regulator</keyword>
<keyword id="KW-0158">Chromosome</keyword>
<keyword id="KW-0238">DNA-binding</keyword>
<keyword id="KW-0544">Nucleosome core</keyword>
<keyword id="KW-0539">Nucleus</keyword>
<keyword id="KW-1185">Reference proteome</keyword>
<keyword id="KW-0804">Transcription</keyword>
<keyword id="KW-0805">Transcription regulation</keyword>
<evidence type="ECO:0000250" key="1"/>
<evidence type="ECO:0000256" key="2">
    <source>
        <dbReference type="SAM" id="MobiDB-lite"/>
    </source>
</evidence>
<evidence type="ECO:0000305" key="3"/>
<gene>
    <name type="primary">HTZ1</name>
    <name type="ordered locus">YALI0F02827g</name>
</gene>
<feature type="chain" id="PRO_0000055339" description="Histone H2A.Z">
    <location>
        <begin position="1"/>
        <end position="140"/>
    </location>
</feature>
<feature type="region of interest" description="Disordered" evidence="2">
    <location>
        <begin position="1"/>
        <end position="38"/>
    </location>
</feature>
<feature type="compositionally biased region" description="Basic residues" evidence="2">
    <location>
        <begin position="7"/>
        <end position="18"/>
    </location>
</feature>
<feature type="modified residue" description="N6-acetyllysine" evidence="1">
    <location>
        <position position="5"/>
    </location>
</feature>
<feature type="modified residue" description="N6-acetyllysine" evidence="1">
    <location>
        <position position="10"/>
    </location>
</feature>
<feature type="modified residue" description="N6-acetyllysine" evidence="1">
    <location>
        <position position="12"/>
    </location>
</feature>
<reference key="1">
    <citation type="journal article" date="2004" name="Nature">
        <title>Genome evolution in yeasts.</title>
        <authorList>
            <person name="Dujon B."/>
            <person name="Sherman D."/>
            <person name="Fischer G."/>
            <person name="Durrens P."/>
            <person name="Casaregola S."/>
            <person name="Lafontaine I."/>
            <person name="de Montigny J."/>
            <person name="Marck C."/>
            <person name="Neuveglise C."/>
            <person name="Talla E."/>
            <person name="Goffard N."/>
            <person name="Frangeul L."/>
            <person name="Aigle M."/>
            <person name="Anthouard V."/>
            <person name="Babour A."/>
            <person name="Barbe V."/>
            <person name="Barnay S."/>
            <person name="Blanchin S."/>
            <person name="Beckerich J.-M."/>
            <person name="Beyne E."/>
            <person name="Bleykasten C."/>
            <person name="Boisrame A."/>
            <person name="Boyer J."/>
            <person name="Cattolico L."/>
            <person name="Confanioleri F."/>
            <person name="de Daruvar A."/>
            <person name="Despons L."/>
            <person name="Fabre E."/>
            <person name="Fairhead C."/>
            <person name="Ferry-Dumazet H."/>
            <person name="Groppi A."/>
            <person name="Hantraye F."/>
            <person name="Hennequin C."/>
            <person name="Jauniaux N."/>
            <person name="Joyet P."/>
            <person name="Kachouri R."/>
            <person name="Kerrest A."/>
            <person name="Koszul R."/>
            <person name="Lemaire M."/>
            <person name="Lesur I."/>
            <person name="Ma L."/>
            <person name="Muller H."/>
            <person name="Nicaud J.-M."/>
            <person name="Nikolski M."/>
            <person name="Oztas S."/>
            <person name="Ozier-Kalogeropoulos O."/>
            <person name="Pellenz S."/>
            <person name="Potier S."/>
            <person name="Richard G.-F."/>
            <person name="Straub M.-L."/>
            <person name="Suleau A."/>
            <person name="Swennen D."/>
            <person name="Tekaia F."/>
            <person name="Wesolowski-Louvel M."/>
            <person name="Westhof E."/>
            <person name="Wirth B."/>
            <person name="Zeniou-Meyer M."/>
            <person name="Zivanovic Y."/>
            <person name="Bolotin-Fukuhara M."/>
            <person name="Thierry A."/>
            <person name="Bouchier C."/>
            <person name="Caudron B."/>
            <person name="Scarpelli C."/>
            <person name="Gaillardin C."/>
            <person name="Weissenbach J."/>
            <person name="Wincker P."/>
            <person name="Souciet J.-L."/>
        </authorList>
    </citation>
    <scope>NUCLEOTIDE SEQUENCE [LARGE SCALE GENOMIC DNA]</scope>
    <source>
        <strain>CLIB 122 / E 150</strain>
    </source>
</reference>
<proteinExistence type="inferred from homology"/>
<dbReference type="EMBL" id="CR382132">
    <property type="protein sequence ID" value="CAG77726.1"/>
    <property type="molecule type" value="Genomic_DNA"/>
</dbReference>
<dbReference type="RefSeq" id="XP_504921.1">
    <property type="nucleotide sequence ID" value="XM_504921.1"/>
</dbReference>
<dbReference type="SMR" id="Q6C341"/>
<dbReference type="FunCoup" id="Q6C341">
    <property type="interactions" value="1098"/>
</dbReference>
<dbReference type="STRING" id="284591.Q6C341"/>
<dbReference type="EnsemblFungi" id="CAG77726">
    <property type="protein sequence ID" value="CAG77726"/>
    <property type="gene ID" value="YALI0_F02827g"/>
</dbReference>
<dbReference type="KEGG" id="yli:2907778"/>
<dbReference type="VEuPathDB" id="FungiDB:YALI0_F02827g"/>
<dbReference type="HOGENOM" id="CLU_062828_2_1_1"/>
<dbReference type="InParanoid" id="Q6C341"/>
<dbReference type="OMA" id="MNKKGAP"/>
<dbReference type="OrthoDB" id="114987at4891"/>
<dbReference type="Proteomes" id="UP000001300">
    <property type="component" value="Chromosome F"/>
</dbReference>
<dbReference type="GO" id="GO:0000791">
    <property type="term" value="C:euchromatin"/>
    <property type="evidence" value="ECO:0007669"/>
    <property type="project" value="EnsemblFungi"/>
</dbReference>
<dbReference type="GO" id="GO:0000786">
    <property type="term" value="C:nucleosome"/>
    <property type="evidence" value="ECO:0000318"/>
    <property type="project" value="GO_Central"/>
</dbReference>
<dbReference type="GO" id="GO:0005634">
    <property type="term" value="C:nucleus"/>
    <property type="evidence" value="ECO:0000318"/>
    <property type="project" value="GO_Central"/>
</dbReference>
<dbReference type="GO" id="GO:0003677">
    <property type="term" value="F:DNA binding"/>
    <property type="evidence" value="ECO:0007669"/>
    <property type="project" value="UniProtKB-KW"/>
</dbReference>
<dbReference type="GO" id="GO:0046982">
    <property type="term" value="F:protein heterodimerization activity"/>
    <property type="evidence" value="ECO:0007669"/>
    <property type="project" value="InterPro"/>
</dbReference>
<dbReference type="GO" id="GO:0030527">
    <property type="term" value="F:structural constituent of chromatin"/>
    <property type="evidence" value="ECO:0000318"/>
    <property type="project" value="GO_Central"/>
</dbReference>
<dbReference type="GO" id="GO:0140898">
    <property type="term" value="P:CENP-A eviction from euchromatin"/>
    <property type="evidence" value="ECO:0007669"/>
    <property type="project" value="EnsemblFungi"/>
</dbReference>
<dbReference type="GO" id="GO:0031507">
    <property type="term" value="P:heterochromatin formation"/>
    <property type="evidence" value="ECO:0000318"/>
    <property type="project" value="GO_Central"/>
</dbReference>
<dbReference type="CDD" id="cd00074">
    <property type="entry name" value="HFD_H2A"/>
    <property type="match status" value="1"/>
</dbReference>
<dbReference type="FunFam" id="1.10.20.10:FF:000021">
    <property type="entry name" value="Histone H2A"/>
    <property type="match status" value="1"/>
</dbReference>
<dbReference type="Gene3D" id="1.10.20.10">
    <property type="entry name" value="Histone, subunit A"/>
    <property type="match status" value="1"/>
</dbReference>
<dbReference type="InterPro" id="IPR009072">
    <property type="entry name" value="Histone-fold"/>
</dbReference>
<dbReference type="InterPro" id="IPR002119">
    <property type="entry name" value="Histone_H2A"/>
</dbReference>
<dbReference type="InterPro" id="IPR007125">
    <property type="entry name" value="Histone_H2A/H2B/H3"/>
</dbReference>
<dbReference type="InterPro" id="IPR032454">
    <property type="entry name" value="Histone_H2A_C"/>
</dbReference>
<dbReference type="InterPro" id="IPR032458">
    <property type="entry name" value="Histone_H2A_CS"/>
</dbReference>
<dbReference type="PANTHER" id="PTHR23430">
    <property type="entry name" value="HISTONE H2A"/>
    <property type="match status" value="1"/>
</dbReference>
<dbReference type="Pfam" id="PF00125">
    <property type="entry name" value="Histone"/>
    <property type="match status" value="1"/>
</dbReference>
<dbReference type="Pfam" id="PF16211">
    <property type="entry name" value="Histone_H2A_C"/>
    <property type="match status" value="1"/>
</dbReference>
<dbReference type="PRINTS" id="PR00620">
    <property type="entry name" value="HISTONEH2A"/>
</dbReference>
<dbReference type="SMART" id="SM00414">
    <property type="entry name" value="H2A"/>
    <property type="match status" value="1"/>
</dbReference>
<dbReference type="SUPFAM" id="SSF47113">
    <property type="entry name" value="Histone-fold"/>
    <property type="match status" value="1"/>
</dbReference>
<dbReference type="PROSITE" id="PS00046">
    <property type="entry name" value="HISTONE_H2A"/>
    <property type="match status" value="1"/>
</dbReference>
<protein>
    <recommendedName>
        <fullName>Histone H2A.Z</fullName>
    </recommendedName>
</protein>
<accession>Q6C341</accession>
<sequence>MSGGKGKGGKGKGGKGKGGKASAAVEGAQQSHSSRAGLQFPVGRIKRYMKKSVQNKVRVGAKAAIYIAAVLEYLTAEVLELAGNAARDLKVKRITPRHLQLAIRGDEELDTLIQATIAYGGVMPHINKALLLKVEQHKKK</sequence>
<name>H2AZ_YARLI</name>
<comment type="function">
    <text evidence="1">Variant histone H2A which can replace H2A in some nucleosomes. Nucleosomes wrap and compact DNA into chromatin, limiting DNA accessibility to the cellular machineries which require DNA as a template. Histones thereby play a central role in transcription regulation, DNA repair, DNA replication and chromosomal stability. DNA accessibility is regulated via a complex set of post-translational modifications of histones, also called histone code, and nucleosome remodeling. This variant is enriched at promoters, it may keep them in a repressed state until the appropriate activation signal is received. Near telomeres, it may counteract gene silencing caused by the spread of heterochromatin proteins. Required for the RNA polymerase II and SPT15/TBP recruitment to the target genes. Involved in chromosome stability (By similarity).</text>
</comment>
<comment type="subunit">
    <text evidence="1">The nucleosome is a histone octamer containing two molecules each of H2A, H2B, H3 and H4 assembled in one H3-H4 heterotetramer and two H2A-H2B heterodimers. The octamer wraps approximately 147 bp of DNA. H2A or its variant H2A.Z forms a heterodimer with H2B. H2A.Z associates with the VPS72/SWC2 subunit of the SWR1 chromatin remodeling complex. Also interacts with RBP1/DNA-directed RNA polymerase II largest subunit (By similarity).</text>
</comment>
<comment type="subcellular location">
    <subcellularLocation>
        <location evidence="1">Nucleus</location>
    </subcellularLocation>
    <subcellularLocation>
        <location evidence="1">Chromosome</location>
    </subcellularLocation>
</comment>
<comment type="PTM">
    <text evidence="1">Acetylated once deposited into chromatin.</text>
</comment>
<comment type="similarity">
    <text evidence="3">Belongs to the histone H2A family.</text>
</comment>